<dbReference type="EMBL" id="CP000061">
    <property type="protein sequence ID" value="ABC65229.1"/>
    <property type="molecule type" value="Genomic_DNA"/>
</dbReference>
<dbReference type="RefSeq" id="WP_011160972.1">
    <property type="nucleotide sequence ID" value="NC_007716.1"/>
</dbReference>
<dbReference type="SMR" id="Q2NK14"/>
<dbReference type="STRING" id="322098.AYWB_112"/>
<dbReference type="KEGG" id="ayw:AYWB_112"/>
<dbReference type="eggNOG" id="COG0828">
    <property type="taxonomic scope" value="Bacteria"/>
</dbReference>
<dbReference type="HOGENOM" id="CLU_159258_3_2_14"/>
<dbReference type="OrthoDB" id="9799244at2"/>
<dbReference type="PhylomeDB" id="Q2NK14"/>
<dbReference type="Proteomes" id="UP000001934">
    <property type="component" value="Chromosome"/>
</dbReference>
<dbReference type="GO" id="GO:1990904">
    <property type="term" value="C:ribonucleoprotein complex"/>
    <property type="evidence" value="ECO:0007669"/>
    <property type="project" value="UniProtKB-KW"/>
</dbReference>
<dbReference type="GO" id="GO:0005840">
    <property type="term" value="C:ribosome"/>
    <property type="evidence" value="ECO:0007669"/>
    <property type="project" value="UniProtKB-KW"/>
</dbReference>
<dbReference type="GO" id="GO:0003735">
    <property type="term" value="F:structural constituent of ribosome"/>
    <property type="evidence" value="ECO:0007669"/>
    <property type="project" value="InterPro"/>
</dbReference>
<dbReference type="GO" id="GO:0006412">
    <property type="term" value="P:translation"/>
    <property type="evidence" value="ECO:0007669"/>
    <property type="project" value="UniProtKB-UniRule"/>
</dbReference>
<dbReference type="Gene3D" id="1.20.5.1150">
    <property type="entry name" value="Ribosomal protein S8"/>
    <property type="match status" value="1"/>
</dbReference>
<dbReference type="HAMAP" id="MF_00358">
    <property type="entry name" value="Ribosomal_bS21"/>
    <property type="match status" value="1"/>
</dbReference>
<dbReference type="InterPro" id="IPR001911">
    <property type="entry name" value="Ribosomal_bS21"/>
</dbReference>
<dbReference type="InterPro" id="IPR038380">
    <property type="entry name" value="Ribosomal_bS21_sf"/>
</dbReference>
<dbReference type="NCBIfam" id="TIGR00030">
    <property type="entry name" value="S21p"/>
    <property type="match status" value="1"/>
</dbReference>
<dbReference type="Pfam" id="PF01165">
    <property type="entry name" value="Ribosomal_S21"/>
    <property type="match status" value="1"/>
</dbReference>
<dbReference type="PRINTS" id="PR00976">
    <property type="entry name" value="RIBOSOMALS21"/>
</dbReference>
<keyword id="KW-0687">Ribonucleoprotein</keyword>
<keyword id="KW-0689">Ribosomal protein</keyword>
<reference key="1">
    <citation type="journal article" date="2006" name="J. Bacteriol.">
        <title>Living with genome instability: the adaptation of phytoplasmas to diverse environments of their insect and plant hosts.</title>
        <authorList>
            <person name="Bai X."/>
            <person name="Zhang J."/>
            <person name="Ewing A."/>
            <person name="Miller S.A."/>
            <person name="Jancso Radek A."/>
            <person name="Shevchenko D.V."/>
            <person name="Tsukerman K."/>
            <person name="Walunas T."/>
            <person name="Lapidus A."/>
            <person name="Campbell J.W."/>
            <person name="Hogenhout S.A."/>
        </authorList>
    </citation>
    <scope>NUCLEOTIDE SEQUENCE [LARGE SCALE GENOMIC DNA]</scope>
    <source>
        <strain>AYWB</strain>
    </source>
</reference>
<protein>
    <recommendedName>
        <fullName evidence="1">Small ribosomal subunit protein bS21</fullName>
    </recommendedName>
    <alternativeName>
        <fullName evidence="3">30S ribosomal protein S21</fullName>
    </alternativeName>
</protein>
<gene>
    <name evidence="1" type="primary">rpsU</name>
    <name type="ordered locus">AYWB_112</name>
</gene>
<feature type="chain" id="PRO_0000266625" description="Small ribosomal subunit protein bS21">
    <location>
        <begin position="1"/>
        <end position="57"/>
    </location>
</feature>
<feature type="region of interest" description="Disordered" evidence="2">
    <location>
        <begin position="34"/>
        <end position="57"/>
    </location>
</feature>
<feature type="compositionally biased region" description="Basic residues" evidence="2">
    <location>
        <begin position="43"/>
        <end position="57"/>
    </location>
</feature>
<name>RS21_AYWBP</name>
<accession>Q2NK14</accession>
<evidence type="ECO:0000255" key="1">
    <source>
        <dbReference type="HAMAP-Rule" id="MF_00358"/>
    </source>
</evidence>
<evidence type="ECO:0000256" key="2">
    <source>
        <dbReference type="SAM" id="MobiDB-lite"/>
    </source>
</evidence>
<evidence type="ECO:0000305" key="3"/>
<proteinExistence type="inferred from homology"/>
<comment type="similarity">
    <text evidence="1">Belongs to the bacterial ribosomal protein bS21 family.</text>
</comment>
<sequence>MPKTVFRKGETIEETLRRFKREVSKSGVLAEARRKEHYIKPSVQKKNRQKNMRSKKR</sequence>
<organism>
    <name type="scientific">Aster yellows witches'-broom phytoplasma (strain AYWB)</name>
    <dbReference type="NCBI Taxonomy" id="322098"/>
    <lineage>
        <taxon>Bacteria</taxon>
        <taxon>Bacillati</taxon>
        <taxon>Mycoplasmatota</taxon>
        <taxon>Mollicutes</taxon>
        <taxon>Acholeplasmatales</taxon>
        <taxon>Acholeplasmataceae</taxon>
        <taxon>Candidatus Phytoplasma</taxon>
        <taxon>16SrI (Aster yellows group)</taxon>
    </lineage>
</organism>